<sequence>MMLVFLLIRRQWRSASVRREEVIRLIALATEESYLAEEVRPATVDYGGDSVSDVYRCAVCLYPTTTRCSQCKSVRYCSSKCQILHWRRGHKEECRSPDYDEEKEEYVQSDYDAKESNVDFPSRGTAYESSSNVSVDVACDMSTSRPSIHKVQPRSEAVDFTTSLNIKDNLYETRPLSRKKSRNRTDKVESASNYSKGKTDAKLRKLGNQNSRRSGDSANMSISDQFLSVGFEEEMNALKHERITSEPSSASAAMSSSSTLLLPSKANSKPKVSQASSSGLKTSVQKVVQHFRPPQSSKKSQPSSSIDEMSFSYELFVKLYCDRVELQPFGLVNLGNSCYANAVLQCLAFTRPLISYLIRGLHSKTCRKKSWCFVCEFEHLILKARGGESPLSPIKILSKLQKIGKHLGPGKEEDAHEFLRCAVDTMQSVFLKEAPAAGPFAEETTLVGLTFGGYLHSKIKCMACLHKSERPELMMDLTVEIDGDIGSLEEALAQFTAYEVLDGENRYFCGRCKSYQKAKKKLMILEGPNILTVVLKRFQSDNFGKLSKPIHFPELLDISPYMSDPNHGDHPVYSLYAVVVHLDAMSTLFSGHYVCYIKTLDGDWFKIDDSNVFPVQLETVLLEGAYMLLYARDSPRPVSKNGGRKSKQRRNLAAIPSRKGNKKQRDGDNNSLLPRVDWSSGSLSSMFSSSDTTSSCSTKDSSGIENLSDYLFGGVEPVWKWDRHNKSQTFD</sequence>
<gene>
    <name type="primary">UBP17</name>
    <name type="ordered locus">At5g65450</name>
    <name type="ORF">MNA5.19</name>
</gene>
<feature type="chain" id="PRO_0000313043" description="Ubiquitin carboxyl-terminal hydrolase 17">
    <location>
        <begin position="1"/>
        <end position="731"/>
    </location>
</feature>
<feature type="domain" description="USP">
    <location>
        <begin position="329"/>
        <end position="633"/>
    </location>
</feature>
<feature type="zinc finger region" description="MYND-type" evidence="2">
    <location>
        <begin position="57"/>
        <end position="94"/>
    </location>
</feature>
<feature type="region of interest" description="Disordered" evidence="4">
    <location>
        <begin position="171"/>
        <end position="219"/>
    </location>
</feature>
<feature type="region of interest" description="Disordered" evidence="4">
    <location>
        <begin position="262"/>
        <end position="281"/>
    </location>
</feature>
<feature type="region of interest" description="Disordered" evidence="4">
    <location>
        <begin position="637"/>
        <end position="702"/>
    </location>
</feature>
<feature type="compositionally biased region" description="Polar residues" evidence="4">
    <location>
        <begin position="207"/>
        <end position="219"/>
    </location>
</feature>
<feature type="compositionally biased region" description="Polar residues" evidence="4">
    <location>
        <begin position="265"/>
        <end position="281"/>
    </location>
</feature>
<feature type="compositionally biased region" description="Low complexity" evidence="4">
    <location>
        <begin position="677"/>
        <end position="701"/>
    </location>
</feature>
<feature type="active site" description="Nucleophile" evidence="3">
    <location>
        <position position="338"/>
    </location>
</feature>
<feature type="active site" description="Proton acceptor" evidence="3">
    <location>
        <position position="592"/>
    </location>
</feature>
<feature type="binding site" evidence="2">
    <location>
        <position position="57"/>
    </location>
    <ligand>
        <name>Zn(2+)</name>
        <dbReference type="ChEBI" id="CHEBI:29105"/>
        <label>1</label>
    </ligand>
</feature>
<feature type="binding site" evidence="2">
    <location>
        <position position="60"/>
    </location>
    <ligand>
        <name>Zn(2+)</name>
        <dbReference type="ChEBI" id="CHEBI:29105"/>
        <label>1</label>
    </ligand>
</feature>
<feature type="binding site" evidence="2">
    <location>
        <position position="68"/>
    </location>
    <ligand>
        <name>Zn(2+)</name>
        <dbReference type="ChEBI" id="CHEBI:29105"/>
        <label>2</label>
    </ligand>
</feature>
<feature type="binding site" evidence="2">
    <location>
        <position position="71"/>
    </location>
    <ligand>
        <name>Zn(2+)</name>
        <dbReference type="ChEBI" id="CHEBI:29105"/>
        <label>2</label>
    </ligand>
</feature>
<feature type="binding site" evidence="2">
    <location>
        <position position="77"/>
    </location>
    <ligand>
        <name>Zn(2+)</name>
        <dbReference type="ChEBI" id="CHEBI:29105"/>
        <label>1</label>
    </ligand>
</feature>
<feature type="binding site" evidence="2">
    <location>
        <position position="81"/>
    </location>
    <ligand>
        <name>Zn(2+)</name>
        <dbReference type="ChEBI" id="CHEBI:29105"/>
        <label>1</label>
    </ligand>
</feature>
<feature type="binding site" evidence="2">
    <location>
        <position position="90"/>
    </location>
    <ligand>
        <name>Zn(2+)</name>
        <dbReference type="ChEBI" id="CHEBI:29105"/>
        <label>2</label>
    </ligand>
</feature>
<feature type="binding site" evidence="2">
    <location>
        <position position="94"/>
    </location>
    <ligand>
        <name>Zn(2+)</name>
        <dbReference type="ChEBI" id="CHEBI:29105"/>
        <label>2</label>
    </ligand>
</feature>
<feature type="splice variant" id="VSP_029990" description="In isoform 2." evidence="5">
    <original>CAVDTMQSVFLKEAPAAGPFAEETTLVG</original>
    <variation>MPGVLLIQCNLFFSKRLLQLVRLLKKLL</variation>
    <location>
        <begin position="421"/>
        <end position="448"/>
    </location>
</feature>
<feature type="splice variant" id="VSP_029991" description="In isoform 2." evidence="5">
    <location>
        <begin position="449"/>
        <end position="731"/>
    </location>
</feature>
<evidence type="ECO:0000250" key="1"/>
<evidence type="ECO:0000255" key="2">
    <source>
        <dbReference type="PROSITE-ProRule" id="PRU00134"/>
    </source>
</evidence>
<evidence type="ECO:0000255" key="3">
    <source>
        <dbReference type="PROSITE-ProRule" id="PRU10092"/>
    </source>
</evidence>
<evidence type="ECO:0000256" key="4">
    <source>
        <dbReference type="SAM" id="MobiDB-lite"/>
    </source>
</evidence>
<evidence type="ECO:0000303" key="5">
    <source>
    </source>
</evidence>
<evidence type="ECO:0000305" key="6"/>
<protein>
    <recommendedName>
        <fullName>Ubiquitin carboxyl-terminal hydrolase 17</fullName>
        <ecNumber>3.4.19.12</ecNumber>
    </recommendedName>
    <alternativeName>
        <fullName>Deubiquitinating enzyme 17</fullName>
        <shortName>AtUBP17</shortName>
    </alternativeName>
    <alternativeName>
        <fullName>Ubiquitin thioesterase 17</fullName>
    </alternativeName>
    <alternativeName>
        <fullName>Ubiquitin-specific-processing protease 17</fullName>
    </alternativeName>
</protein>
<name>UBP17_ARATH</name>
<organism>
    <name type="scientific">Arabidopsis thaliana</name>
    <name type="common">Mouse-ear cress</name>
    <dbReference type="NCBI Taxonomy" id="3702"/>
    <lineage>
        <taxon>Eukaryota</taxon>
        <taxon>Viridiplantae</taxon>
        <taxon>Streptophyta</taxon>
        <taxon>Embryophyta</taxon>
        <taxon>Tracheophyta</taxon>
        <taxon>Spermatophyta</taxon>
        <taxon>Magnoliopsida</taxon>
        <taxon>eudicotyledons</taxon>
        <taxon>Gunneridae</taxon>
        <taxon>Pentapetalae</taxon>
        <taxon>rosids</taxon>
        <taxon>malvids</taxon>
        <taxon>Brassicales</taxon>
        <taxon>Brassicaceae</taxon>
        <taxon>Camelineae</taxon>
        <taxon>Arabidopsis</taxon>
    </lineage>
</organism>
<accession>Q9FKP5</accession>
<keyword id="KW-0025">Alternative splicing</keyword>
<keyword id="KW-0378">Hydrolase</keyword>
<keyword id="KW-0479">Metal-binding</keyword>
<keyword id="KW-0645">Protease</keyword>
<keyword id="KW-1185">Reference proteome</keyword>
<keyword id="KW-0788">Thiol protease</keyword>
<keyword id="KW-0833">Ubl conjugation pathway</keyword>
<keyword id="KW-0862">Zinc</keyword>
<keyword id="KW-0863">Zinc-finger</keyword>
<proteinExistence type="evidence at transcript level"/>
<comment type="function">
    <text evidence="1">Recognizes and hydrolyzes the peptide bond at the C-terminal Gly of ubiquitin. Involved in the processing of poly-ubiquitin precursors as well as that of ubiquitinated proteins (By similarity).</text>
</comment>
<comment type="catalytic activity">
    <reaction>
        <text>Thiol-dependent hydrolysis of ester, thioester, amide, peptide and isopeptide bonds formed by the C-terminal Gly of ubiquitin (a 76-residue protein attached to proteins as an intracellular targeting signal).</text>
        <dbReference type="EC" id="3.4.19.12"/>
    </reaction>
</comment>
<comment type="alternative products">
    <event type="alternative splicing"/>
    <isoform>
        <id>Q9FKP5-1</id>
        <name>1</name>
        <sequence type="displayed"/>
    </isoform>
    <isoform>
        <id>Q9FKP5-2</id>
        <name>2</name>
        <sequence type="described" ref="VSP_029990 VSP_029991"/>
    </isoform>
</comment>
<comment type="miscellaneous">
    <molecule>Isoform 2</molecule>
    <text evidence="6">May be due to a competing acceptor splice site.</text>
</comment>
<comment type="similarity">
    <text evidence="6">Belongs to the peptidase C19 family.</text>
</comment>
<reference key="1">
    <citation type="journal article" date="2000" name="Plant Physiol.">
        <title>The ubiquitin-specific protease family from Arabidopsis. AtUBP1 and 2 are required for the resistance to the amino acid analog canavanine.</title>
        <authorList>
            <person name="Yan N."/>
            <person name="Doelling J.H."/>
            <person name="Falbel T.G."/>
            <person name="Durski A.M."/>
            <person name="Vierstra R.D."/>
        </authorList>
    </citation>
    <scope>NUCLEOTIDE SEQUENCE [MRNA] (ISOFORM 2)</scope>
    <scope>GENE FAMILY ORGANIZATION</scope>
    <scope>NOMENCLATURE</scope>
    <source>
        <strain>cv. Columbia</strain>
    </source>
</reference>
<reference key="2">
    <citation type="journal article" date="1998" name="DNA Res.">
        <title>Structural analysis of Arabidopsis thaliana chromosome 5. V. Sequence features of the regions of 1,381,565 bp covered by twenty one physically assigned P1 and TAC clones.</title>
        <authorList>
            <person name="Kaneko T."/>
            <person name="Kotani H."/>
            <person name="Nakamura Y."/>
            <person name="Sato S."/>
            <person name="Asamizu E."/>
            <person name="Miyajima N."/>
            <person name="Tabata S."/>
        </authorList>
    </citation>
    <scope>NUCLEOTIDE SEQUENCE [LARGE SCALE GENOMIC DNA]</scope>
    <source>
        <strain>cv. Columbia</strain>
    </source>
</reference>
<reference key="3">
    <citation type="journal article" date="2017" name="Plant J.">
        <title>Araport11: a complete reannotation of the Arabidopsis thaliana reference genome.</title>
        <authorList>
            <person name="Cheng C.Y."/>
            <person name="Krishnakumar V."/>
            <person name="Chan A.P."/>
            <person name="Thibaud-Nissen F."/>
            <person name="Schobel S."/>
            <person name="Town C.D."/>
        </authorList>
    </citation>
    <scope>GENOME REANNOTATION</scope>
    <source>
        <strain>cv. Columbia</strain>
    </source>
</reference>
<dbReference type="EC" id="3.4.19.12"/>
<dbReference type="EMBL" id="AF302667">
    <property type="status" value="NOT_ANNOTATED_CDS"/>
    <property type="molecule type" value="mRNA"/>
</dbReference>
<dbReference type="EMBL" id="AB011479">
    <property type="protein sequence ID" value="BAB11567.1"/>
    <property type="molecule type" value="Genomic_DNA"/>
</dbReference>
<dbReference type="EMBL" id="CP002688">
    <property type="protein sequence ID" value="AED98058.1"/>
    <property type="molecule type" value="Genomic_DNA"/>
</dbReference>
<dbReference type="RefSeq" id="NP_201348.1">
    <molecule id="Q9FKP5-1"/>
    <property type="nucleotide sequence ID" value="NM_125943.2"/>
</dbReference>
<dbReference type="SMR" id="Q9FKP5"/>
<dbReference type="FunCoup" id="Q9FKP5">
    <property type="interactions" value="969"/>
</dbReference>
<dbReference type="STRING" id="3702.Q9FKP5"/>
<dbReference type="MEROPS" id="C19.A06"/>
<dbReference type="PaxDb" id="3702-AT5G65450.1"/>
<dbReference type="EnsemblPlants" id="AT5G65450.1">
    <molecule id="Q9FKP5-1"/>
    <property type="protein sequence ID" value="AT5G65450.1"/>
    <property type="gene ID" value="AT5G65450"/>
</dbReference>
<dbReference type="GeneID" id="836670"/>
<dbReference type="Gramene" id="AT5G65450.1">
    <molecule id="Q9FKP5-1"/>
    <property type="protein sequence ID" value="AT5G65450.1"/>
    <property type="gene ID" value="AT5G65450"/>
</dbReference>
<dbReference type="KEGG" id="ath:AT5G65450"/>
<dbReference type="Araport" id="AT5G65450"/>
<dbReference type="TAIR" id="AT5G65450">
    <property type="gene designation" value="UBP17"/>
</dbReference>
<dbReference type="eggNOG" id="KOG1865">
    <property type="taxonomic scope" value="Eukaryota"/>
</dbReference>
<dbReference type="HOGENOM" id="CLU_007397_1_0_1"/>
<dbReference type="InParanoid" id="Q9FKP5"/>
<dbReference type="OMA" id="GHGENDR"/>
<dbReference type="OrthoDB" id="420187at2759"/>
<dbReference type="PhylomeDB" id="Q9FKP5"/>
<dbReference type="PRO" id="PR:Q9FKP5"/>
<dbReference type="Proteomes" id="UP000006548">
    <property type="component" value="Chromosome 5"/>
</dbReference>
<dbReference type="ExpressionAtlas" id="Q9FKP5">
    <property type="expression patterns" value="baseline and differential"/>
</dbReference>
<dbReference type="GO" id="GO:0004843">
    <property type="term" value="F:cysteine-type deubiquitinase activity"/>
    <property type="evidence" value="ECO:0007669"/>
    <property type="project" value="UniProtKB-EC"/>
</dbReference>
<dbReference type="GO" id="GO:0008270">
    <property type="term" value="F:zinc ion binding"/>
    <property type="evidence" value="ECO:0007669"/>
    <property type="project" value="UniProtKB-KW"/>
</dbReference>
<dbReference type="GO" id="GO:0016579">
    <property type="term" value="P:protein deubiquitination"/>
    <property type="evidence" value="ECO:0007669"/>
    <property type="project" value="InterPro"/>
</dbReference>
<dbReference type="GO" id="GO:0006508">
    <property type="term" value="P:proteolysis"/>
    <property type="evidence" value="ECO:0007669"/>
    <property type="project" value="UniProtKB-KW"/>
</dbReference>
<dbReference type="FunFam" id="3.90.70.10:FF:000026">
    <property type="entry name" value="Ubiquitin carboxyl-terminal hydrolase 15"/>
    <property type="match status" value="1"/>
</dbReference>
<dbReference type="FunFam" id="6.10.140.2220:FF:000006">
    <property type="entry name" value="Ubiquitin carboxyl-terminal hydrolase 15"/>
    <property type="match status" value="1"/>
</dbReference>
<dbReference type="Gene3D" id="6.10.140.2220">
    <property type="match status" value="1"/>
</dbReference>
<dbReference type="Gene3D" id="3.90.70.10">
    <property type="entry name" value="Cysteine proteinases"/>
    <property type="match status" value="1"/>
</dbReference>
<dbReference type="InterPro" id="IPR038765">
    <property type="entry name" value="Papain-like_cys_pep_sf"/>
</dbReference>
<dbReference type="InterPro" id="IPR050164">
    <property type="entry name" value="Peptidase_C19"/>
</dbReference>
<dbReference type="InterPro" id="IPR001394">
    <property type="entry name" value="Peptidase_C19_UCH"/>
</dbReference>
<dbReference type="InterPro" id="IPR018200">
    <property type="entry name" value="USP_CS"/>
</dbReference>
<dbReference type="InterPro" id="IPR028889">
    <property type="entry name" value="USP_dom"/>
</dbReference>
<dbReference type="InterPro" id="IPR002893">
    <property type="entry name" value="Znf_MYND"/>
</dbReference>
<dbReference type="PANTHER" id="PTHR24006">
    <property type="entry name" value="UBIQUITIN CARBOXYL-TERMINAL HYDROLASE"/>
    <property type="match status" value="1"/>
</dbReference>
<dbReference type="PANTHER" id="PTHR24006:SF690">
    <property type="entry name" value="UBIQUITIN CARBOXYL-TERMINAL HYDROLASE 17"/>
    <property type="match status" value="1"/>
</dbReference>
<dbReference type="Pfam" id="PF00443">
    <property type="entry name" value="UCH"/>
    <property type="match status" value="1"/>
</dbReference>
<dbReference type="Pfam" id="PF01753">
    <property type="entry name" value="zf-MYND"/>
    <property type="match status" value="1"/>
</dbReference>
<dbReference type="SUPFAM" id="SSF54001">
    <property type="entry name" value="Cysteine proteinases"/>
    <property type="match status" value="1"/>
</dbReference>
<dbReference type="SUPFAM" id="SSF144232">
    <property type="entry name" value="HIT/MYND zinc finger-like"/>
    <property type="match status" value="1"/>
</dbReference>
<dbReference type="PROSITE" id="PS00972">
    <property type="entry name" value="USP_1"/>
    <property type="match status" value="1"/>
</dbReference>
<dbReference type="PROSITE" id="PS50235">
    <property type="entry name" value="USP_3"/>
    <property type="match status" value="1"/>
</dbReference>
<dbReference type="PROSITE" id="PS01360">
    <property type="entry name" value="ZF_MYND_1"/>
    <property type="match status" value="1"/>
</dbReference>
<dbReference type="PROSITE" id="PS50865">
    <property type="entry name" value="ZF_MYND_2"/>
    <property type="match status" value="1"/>
</dbReference>